<proteinExistence type="inferred from homology"/>
<keyword id="KW-1003">Cell membrane</keyword>
<keyword id="KW-0325">Glycoprotein</keyword>
<keyword id="KW-0336">GPI-anchor</keyword>
<keyword id="KW-0449">Lipoprotein</keyword>
<keyword id="KW-0472">Membrane</keyword>
<keyword id="KW-1185">Reference proteome</keyword>
<keyword id="KW-0677">Repeat</keyword>
<keyword id="KW-0732">Signal</keyword>
<keyword id="KW-0748">Sporozoite</keyword>
<name>104K_THEAN</name>
<feature type="signal peptide" evidence="2">
    <location>
        <begin position="1"/>
        <end position="19"/>
    </location>
</feature>
<feature type="chain" id="PRO_0000232680" description="104 kDa microneme/rhoptry antigen">
    <location>
        <begin position="20"/>
        <end position="873"/>
    </location>
</feature>
<feature type="propeptide" id="PRO_0000232681" description="Removed in mature form" evidence="2">
    <location>
        <begin position="874"/>
        <end position="893"/>
    </location>
</feature>
<feature type="region of interest" description="Disordered" evidence="3">
    <location>
        <begin position="492"/>
        <end position="666"/>
    </location>
</feature>
<feature type="region of interest" description="Disordered" evidence="3">
    <location>
        <begin position="681"/>
        <end position="799"/>
    </location>
</feature>
<feature type="region of interest" description="Disordered" evidence="3">
    <location>
        <begin position="818"/>
        <end position="873"/>
    </location>
</feature>
<feature type="compositionally biased region" description="Basic and acidic residues" evidence="3">
    <location>
        <begin position="525"/>
        <end position="565"/>
    </location>
</feature>
<feature type="compositionally biased region" description="Basic and acidic residues" evidence="3">
    <location>
        <begin position="573"/>
        <end position="591"/>
    </location>
</feature>
<feature type="compositionally biased region" description="Low complexity" evidence="3">
    <location>
        <begin position="595"/>
        <end position="606"/>
    </location>
</feature>
<feature type="compositionally biased region" description="Basic and acidic residues" evidence="3">
    <location>
        <begin position="731"/>
        <end position="755"/>
    </location>
</feature>
<feature type="compositionally biased region" description="Basic and acidic residues" evidence="3">
    <location>
        <begin position="788"/>
        <end position="797"/>
    </location>
</feature>
<feature type="compositionally biased region" description="Basic and acidic residues" evidence="3">
    <location>
        <begin position="818"/>
        <end position="830"/>
    </location>
</feature>
<feature type="compositionally biased region" description="Acidic residues" evidence="3">
    <location>
        <begin position="831"/>
        <end position="841"/>
    </location>
</feature>
<feature type="compositionally biased region" description="Basic residues" evidence="3">
    <location>
        <begin position="851"/>
        <end position="869"/>
    </location>
</feature>
<feature type="lipid moiety-binding region" description="GPI-anchor amidated aspartate" evidence="2">
    <location>
        <position position="873"/>
    </location>
</feature>
<accession>Q4U9M9</accession>
<organism>
    <name type="scientific">Theileria annulata</name>
    <dbReference type="NCBI Taxonomy" id="5874"/>
    <lineage>
        <taxon>Eukaryota</taxon>
        <taxon>Sar</taxon>
        <taxon>Alveolata</taxon>
        <taxon>Apicomplexa</taxon>
        <taxon>Aconoidasida</taxon>
        <taxon>Piroplasmida</taxon>
        <taxon>Theileriidae</taxon>
        <taxon>Theileria</taxon>
    </lineage>
</organism>
<dbReference type="EMBL" id="CR940353">
    <property type="protein sequence ID" value="CAI76474.1"/>
    <property type="molecule type" value="Genomic_DNA"/>
</dbReference>
<dbReference type="RefSeq" id="XP_953099.1">
    <property type="nucleotide sequence ID" value="XM_948006.1"/>
</dbReference>
<dbReference type="STRING" id="5874.Q4U9M9"/>
<dbReference type="GeneID" id="3863060"/>
<dbReference type="KEGG" id="tan:TA08425"/>
<dbReference type="VEuPathDB" id="PiroplasmaDB:TA08425"/>
<dbReference type="eggNOG" id="ENOG502RY34">
    <property type="taxonomic scope" value="Eukaryota"/>
</dbReference>
<dbReference type="InParanoid" id="Q4U9M9"/>
<dbReference type="OMA" id="NGHICKM"/>
<dbReference type="OrthoDB" id="361953at2759"/>
<dbReference type="Proteomes" id="UP000001950">
    <property type="component" value="Chromosome 4"/>
</dbReference>
<dbReference type="GO" id="GO:0005886">
    <property type="term" value="C:plasma membrane"/>
    <property type="evidence" value="ECO:0007669"/>
    <property type="project" value="UniProtKB-SubCell"/>
</dbReference>
<dbReference type="GO" id="GO:0098552">
    <property type="term" value="C:side of membrane"/>
    <property type="evidence" value="ECO:0007669"/>
    <property type="project" value="UniProtKB-KW"/>
</dbReference>
<dbReference type="InterPro" id="IPR007480">
    <property type="entry name" value="DUF529"/>
</dbReference>
<dbReference type="Pfam" id="PF04385">
    <property type="entry name" value="FAINT"/>
    <property type="match status" value="1"/>
</dbReference>
<evidence type="ECO:0000250" key="1"/>
<evidence type="ECO:0000255" key="2"/>
<evidence type="ECO:0000256" key="3">
    <source>
        <dbReference type="SAM" id="MobiDB-lite"/>
    </source>
</evidence>
<evidence type="ECO:0000305" key="4"/>
<gene>
    <name type="ORF">TA08425</name>
</gene>
<protein>
    <recommendedName>
        <fullName>104 kDa microneme/rhoptry antigen</fullName>
    </recommendedName>
    <alternativeName>
        <fullName>p104</fullName>
    </alternativeName>
</protein>
<comment type="subcellular location">
    <subcellularLocation>
        <location evidence="4">Cell membrane</location>
        <topology evidence="4">Lipid-anchor</topology>
        <topology evidence="4">GPI-anchor</topology>
    </subcellularLocation>
    <text evidence="1">In microneme/rhoptry complexes.</text>
</comment>
<sequence length="893" mass="101921">MKFLVLLFNILCLFPILGADELVMSPIPTTDVQPKVTFDINSEVSSGPLYLNPVEMAGVKYLQLQRQPGVQVHKVVEGDIVIWENEEMPLYTCAIVTQNEVPYMAYVELLEDPDLIFFLKEGDQWAPIPEDQYLARLQQLRQQIHTESFFSLNLSFQHENYKYEMVSSFQHSIKMVVFTPKNGHICKMVYDKNIRIFKALYNEYVTSVIGFFRGLKLLLLNIFVIDDRGMIGNKYFQLLDDKYAPISVQGYVATIPKLKDFAEPYHPIILDISDIDYVNFYLGDATYHDPGFKIVPKTPQCITKVVDGNEVIYESSNPSVECVYKVTYYDKKNESMLRLDLNHSPPSYTSYYAKREGVWVTSTYIDLEEKIEELQDHRSTELDVMFMSDKDLNVVPLTNGNLEYFMVTPKPHRDIIIVFDGSEVLWYYEGLENHLVCTWIYVTEGAPRLVHLRVKDRIPQNTDIYMVKFGEYWVRISKTQYTQEIKKLIKKSKKKLPSIEEEDSDKHGGPPKGPEPPTGPGHSSSESKEHEDSKESKEPKEHGSPKETKEGEVTKKPGPAKEHKPSKIPVYTKRPEFPKKSKSPKRPESPKSPKRPVSPQRPVSPKSPKRPESLDIPKSPKRPESPKSPKRPVSPQRPVSPRRPESPKSPKSPKSPKSPKVPFDPKFKEKLYDSYLDKAAKTKETVTLPPVLPTDESFTHTPIGEPTAEQPDDIEPIEESVFIKETGILTEEVKTEDIHSETGEPEEPKRPDSPTKHSPKPTGTHPSMPKKRRRSDGLALSTTDLESEAGRILRDPTGKIVTMKRSKSFDDLTTVREKEHMGAEIRKIVVDDDGTEADDEDTHPSKEKHLSTVRRRRPRPKKSSKSSKPRKPDSAFVPSIIFIFLVSLIVGIL</sequence>
<reference key="1">
    <citation type="journal article" date="2005" name="Science">
        <title>Genome of the host-cell transforming parasite Theileria annulata compared with T. parva.</title>
        <authorList>
            <person name="Pain A."/>
            <person name="Renauld H."/>
            <person name="Berriman M."/>
            <person name="Murphy L."/>
            <person name="Yeats C.A."/>
            <person name="Weir W."/>
            <person name="Kerhornou A."/>
            <person name="Aslett M."/>
            <person name="Bishop R."/>
            <person name="Bouchier C."/>
            <person name="Cochet M."/>
            <person name="Coulson R.M.R."/>
            <person name="Cronin A."/>
            <person name="de Villiers E.P."/>
            <person name="Fraser A."/>
            <person name="Fosker N."/>
            <person name="Gardner M."/>
            <person name="Goble A."/>
            <person name="Griffiths-Jones S."/>
            <person name="Harris D.E."/>
            <person name="Katzer F."/>
            <person name="Larke N."/>
            <person name="Lord A."/>
            <person name="Maser P."/>
            <person name="McKellar S."/>
            <person name="Mooney P."/>
            <person name="Morton F."/>
            <person name="Nene V."/>
            <person name="O'Neil S."/>
            <person name="Price C."/>
            <person name="Quail M.A."/>
            <person name="Rabbinowitsch E."/>
            <person name="Rawlings N.D."/>
            <person name="Rutter S."/>
            <person name="Saunders D."/>
            <person name="Seeger K."/>
            <person name="Shah T."/>
            <person name="Squares R."/>
            <person name="Squares S."/>
            <person name="Tivey A."/>
            <person name="Walker A.R."/>
            <person name="Woodward J."/>
            <person name="Dobbelaere D.A.E."/>
            <person name="Langsley G."/>
            <person name="Rajandream M.A."/>
            <person name="McKeever D."/>
            <person name="Shiels B."/>
            <person name="Tait A."/>
            <person name="Barrell B.G."/>
            <person name="Hall N."/>
        </authorList>
    </citation>
    <scope>NUCLEOTIDE SEQUENCE [LARGE SCALE GENOMIC DNA]</scope>
    <source>
        <strain>Ankara</strain>
    </source>
</reference>